<name>DF159_ARATH</name>
<protein>
    <recommendedName>
        <fullName>Defensin-like protein 159</fullName>
    </recommendedName>
    <alternativeName>
        <fullName>Low-molecular-weight cysteine-rich protein 25</fullName>
        <shortName>Protein LCR25</shortName>
    </alternativeName>
</protein>
<gene>
    <name type="primary">LCR25</name>
    <name type="ordered locus">At4g29305</name>
    <name type="ORF">F17A13</name>
</gene>
<dbReference type="EMBL" id="AL096692">
    <property type="status" value="NOT_ANNOTATED_CDS"/>
    <property type="molecule type" value="Genomic_DNA"/>
</dbReference>
<dbReference type="EMBL" id="AL161574">
    <property type="status" value="NOT_ANNOTATED_CDS"/>
    <property type="molecule type" value="Genomic_DNA"/>
</dbReference>
<dbReference type="EMBL" id="CP002687">
    <property type="protein sequence ID" value="AEE85616.1"/>
    <property type="molecule type" value="Genomic_DNA"/>
</dbReference>
<dbReference type="EMBL" id="DQ912268">
    <property type="protein sequence ID" value="ABK27963.1"/>
    <property type="status" value="ALT_SEQ"/>
    <property type="molecule type" value="mRNA"/>
</dbReference>
<dbReference type="EMBL" id="EF182821">
    <property type="status" value="NOT_ANNOTATED_CDS"/>
    <property type="molecule type" value="mRNA"/>
</dbReference>
<dbReference type="RefSeq" id="NP_001031747.1">
    <property type="nucleotide sequence ID" value="NM_001036670.2"/>
</dbReference>
<dbReference type="SMR" id="P82739"/>
<dbReference type="STRING" id="3702.P82739"/>
<dbReference type="PaxDb" id="3702-AT4G29305.1"/>
<dbReference type="ProteomicsDB" id="224573"/>
<dbReference type="EnsemblPlants" id="AT4G29305.1">
    <property type="protein sequence ID" value="AT4G29305.1"/>
    <property type="gene ID" value="AT4G29305"/>
</dbReference>
<dbReference type="GeneID" id="3770555"/>
<dbReference type="Gramene" id="AT4G29305.1">
    <property type="protein sequence ID" value="AT4G29305.1"/>
    <property type="gene ID" value="AT4G29305"/>
</dbReference>
<dbReference type="KEGG" id="ath:AT4G29305"/>
<dbReference type="Araport" id="AT4G29305"/>
<dbReference type="TAIR" id="AT4G29305">
    <property type="gene designation" value="LCR25"/>
</dbReference>
<dbReference type="HOGENOM" id="CLU_182511_1_0_1"/>
<dbReference type="InParanoid" id="P82739"/>
<dbReference type="OMA" id="AEGKRCH"/>
<dbReference type="OrthoDB" id="1072718at2759"/>
<dbReference type="PhylomeDB" id="P82739"/>
<dbReference type="PRO" id="PR:P82739"/>
<dbReference type="Proteomes" id="UP000006548">
    <property type="component" value="Chromosome 4"/>
</dbReference>
<dbReference type="ExpressionAtlas" id="P82739">
    <property type="expression patterns" value="baseline and differential"/>
</dbReference>
<dbReference type="GO" id="GO:0005576">
    <property type="term" value="C:extracellular region"/>
    <property type="evidence" value="ECO:0007669"/>
    <property type="project" value="UniProtKB-SubCell"/>
</dbReference>
<dbReference type="GO" id="GO:0050832">
    <property type="term" value="P:defense response to fungus"/>
    <property type="evidence" value="ECO:0007669"/>
    <property type="project" value="UniProtKB-KW"/>
</dbReference>
<dbReference type="GO" id="GO:0031640">
    <property type="term" value="P:killing of cells of another organism"/>
    <property type="evidence" value="ECO:0007669"/>
    <property type="project" value="UniProtKB-KW"/>
</dbReference>
<dbReference type="InterPro" id="IPR010851">
    <property type="entry name" value="DEFL"/>
</dbReference>
<dbReference type="PANTHER" id="PTHR33830:SF23">
    <property type="entry name" value="DEFENSIN-LIKE PROTEIN 159-RELATED"/>
    <property type="match status" value="1"/>
</dbReference>
<dbReference type="PANTHER" id="PTHR33830">
    <property type="entry name" value="DEFENSIN-LIKE PROTEIN 184-RELATED"/>
    <property type="match status" value="1"/>
</dbReference>
<dbReference type="Pfam" id="PF07333">
    <property type="entry name" value="SLR1-BP"/>
    <property type="match status" value="1"/>
</dbReference>
<accession>P82739</accession>
<accession>A0MJW9</accession>
<keyword id="KW-0929">Antimicrobial</keyword>
<keyword id="KW-1015">Disulfide bond</keyword>
<keyword id="KW-0295">Fungicide</keyword>
<keyword id="KW-0611">Plant defense</keyword>
<keyword id="KW-1185">Reference proteome</keyword>
<keyword id="KW-0964">Secreted</keyword>
<keyword id="KW-0732">Signal</keyword>
<sequence length="77" mass="8360">MAKLSCSYFLVLILVFSAFLMVERAEGKRCHLTIDKATACSLSDCRLSCYSGYNGVGKCFDDPKVAGPSNCGCIYNC</sequence>
<comment type="subcellular location">
    <subcellularLocation>
        <location evidence="1">Secreted</location>
    </subcellularLocation>
</comment>
<comment type="similarity">
    <text evidence="4">Belongs to the DEFL family.</text>
</comment>
<comment type="sequence caution" evidence="4">
    <conflict type="erroneous termination">
        <sequence resource="EMBL-CDS" id="ABK27963"/>
    </conflict>
    <text>Extended C-terminus.</text>
</comment>
<reference evidence="4" key="1">
    <citation type="journal article" date="1999" name="Nature">
        <title>Sequence and analysis of chromosome 4 of the plant Arabidopsis thaliana.</title>
        <authorList>
            <person name="Mayer K.F.X."/>
            <person name="Schueller C."/>
            <person name="Wambutt R."/>
            <person name="Murphy G."/>
            <person name="Volckaert G."/>
            <person name="Pohl T."/>
            <person name="Duesterhoeft A."/>
            <person name="Stiekema W."/>
            <person name="Entian K.-D."/>
            <person name="Terryn N."/>
            <person name="Harris B."/>
            <person name="Ansorge W."/>
            <person name="Brandt P."/>
            <person name="Grivell L.A."/>
            <person name="Rieger M."/>
            <person name="Weichselgartner M."/>
            <person name="de Simone V."/>
            <person name="Obermaier B."/>
            <person name="Mache R."/>
            <person name="Mueller M."/>
            <person name="Kreis M."/>
            <person name="Delseny M."/>
            <person name="Puigdomenech P."/>
            <person name="Watson M."/>
            <person name="Schmidtheini T."/>
            <person name="Reichert B."/>
            <person name="Portetelle D."/>
            <person name="Perez-Alonso M."/>
            <person name="Boutry M."/>
            <person name="Bancroft I."/>
            <person name="Vos P."/>
            <person name="Hoheisel J."/>
            <person name="Zimmermann W."/>
            <person name="Wedler H."/>
            <person name="Ridley P."/>
            <person name="Langham S.-A."/>
            <person name="McCullagh B."/>
            <person name="Bilham L."/>
            <person name="Robben J."/>
            <person name="van der Schueren J."/>
            <person name="Grymonprez B."/>
            <person name="Chuang Y.-J."/>
            <person name="Vandenbussche F."/>
            <person name="Braeken M."/>
            <person name="Weltjens I."/>
            <person name="Voet M."/>
            <person name="Bastiaens I."/>
            <person name="Aert R."/>
            <person name="Defoor E."/>
            <person name="Weitzenegger T."/>
            <person name="Bothe G."/>
            <person name="Ramsperger U."/>
            <person name="Hilbert H."/>
            <person name="Braun M."/>
            <person name="Holzer E."/>
            <person name="Brandt A."/>
            <person name="Peters S."/>
            <person name="van Staveren M."/>
            <person name="Dirkse W."/>
            <person name="Mooijman P."/>
            <person name="Klein Lankhorst R."/>
            <person name="Rose M."/>
            <person name="Hauf J."/>
            <person name="Koetter P."/>
            <person name="Berneiser S."/>
            <person name="Hempel S."/>
            <person name="Feldpausch M."/>
            <person name="Lamberth S."/>
            <person name="Van den Daele H."/>
            <person name="De Keyser A."/>
            <person name="Buysshaert C."/>
            <person name="Gielen J."/>
            <person name="Villarroel R."/>
            <person name="De Clercq R."/>
            <person name="van Montagu M."/>
            <person name="Rogers J."/>
            <person name="Cronin A."/>
            <person name="Quail M.A."/>
            <person name="Bray-Allen S."/>
            <person name="Clark L."/>
            <person name="Doggett J."/>
            <person name="Hall S."/>
            <person name="Kay M."/>
            <person name="Lennard N."/>
            <person name="McLay K."/>
            <person name="Mayes R."/>
            <person name="Pettett A."/>
            <person name="Rajandream M.A."/>
            <person name="Lyne M."/>
            <person name="Benes V."/>
            <person name="Rechmann S."/>
            <person name="Borkova D."/>
            <person name="Bloecker H."/>
            <person name="Scharfe M."/>
            <person name="Grimm M."/>
            <person name="Loehnert T.-H."/>
            <person name="Dose S."/>
            <person name="de Haan M."/>
            <person name="Maarse A.C."/>
            <person name="Schaefer M."/>
            <person name="Mueller-Auer S."/>
            <person name="Gabel C."/>
            <person name="Fuchs M."/>
            <person name="Fartmann B."/>
            <person name="Granderath K."/>
            <person name="Dauner D."/>
            <person name="Herzl A."/>
            <person name="Neumann S."/>
            <person name="Argiriou A."/>
            <person name="Vitale D."/>
            <person name="Liguori R."/>
            <person name="Piravandi E."/>
            <person name="Massenet O."/>
            <person name="Quigley F."/>
            <person name="Clabauld G."/>
            <person name="Muendlein A."/>
            <person name="Felber R."/>
            <person name="Schnabl S."/>
            <person name="Hiller R."/>
            <person name="Schmidt W."/>
            <person name="Lecharny A."/>
            <person name="Aubourg S."/>
            <person name="Chefdor F."/>
            <person name="Cooke R."/>
            <person name="Berger C."/>
            <person name="Monfort A."/>
            <person name="Casacuberta E."/>
            <person name="Gibbons T."/>
            <person name="Weber N."/>
            <person name="Vandenbol M."/>
            <person name="Bargues M."/>
            <person name="Terol J."/>
            <person name="Torres A."/>
            <person name="Perez-Perez A."/>
            <person name="Purnelle B."/>
            <person name="Bent E."/>
            <person name="Johnson S."/>
            <person name="Tacon D."/>
            <person name="Jesse T."/>
            <person name="Heijnen L."/>
            <person name="Schwarz S."/>
            <person name="Scholler P."/>
            <person name="Heber S."/>
            <person name="Francs P."/>
            <person name="Bielke C."/>
            <person name="Frishman D."/>
            <person name="Haase D."/>
            <person name="Lemcke K."/>
            <person name="Mewes H.-W."/>
            <person name="Stocker S."/>
            <person name="Zaccaria P."/>
            <person name="Bevan M."/>
            <person name="Wilson R.K."/>
            <person name="de la Bastide M."/>
            <person name="Habermann K."/>
            <person name="Parnell L."/>
            <person name="Dedhia N."/>
            <person name="Gnoj L."/>
            <person name="Schutz K."/>
            <person name="Huang E."/>
            <person name="Spiegel L."/>
            <person name="Sekhon M."/>
            <person name="Murray J."/>
            <person name="Sheet P."/>
            <person name="Cordes M."/>
            <person name="Abu-Threideh J."/>
            <person name="Stoneking T."/>
            <person name="Kalicki J."/>
            <person name="Graves T."/>
            <person name="Harmon G."/>
            <person name="Edwards J."/>
            <person name="Latreille P."/>
            <person name="Courtney L."/>
            <person name="Cloud J."/>
            <person name="Abbott A."/>
            <person name="Scott K."/>
            <person name="Johnson D."/>
            <person name="Minx P."/>
            <person name="Bentley D."/>
            <person name="Fulton B."/>
            <person name="Miller N."/>
            <person name="Greco T."/>
            <person name="Kemp K."/>
            <person name="Kramer J."/>
            <person name="Fulton L."/>
            <person name="Mardis E."/>
            <person name="Dante M."/>
            <person name="Pepin K."/>
            <person name="Hillier L.W."/>
            <person name="Nelson J."/>
            <person name="Spieth J."/>
            <person name="Ryan E."/>
            <person name="Andrews S."/>
            <person name="Geisel C."/>
            <person name="Layman D."/>
            <person name="Du H."/>
            <person name="Ali J."/>
            <person name="Berghoff A."/>
            <person name="Jones K."/>
            <person name="Drone K."/>
            <person name="Cotton M."/>
            <person name="Joshu C."/>
            <person name="Antonoiu B."/>
            <person name="Zidanic M."/>
            <person name="Strong C."/>
            <person name="Sun H."/>
            <person name="Lamar B."/>
            <person name="Yordan C."/>
            <person name="Ma P."/>
            <person name="Zhong J."/>
            <person name="Preston R."/>
            <person name="Vil D."/>
            <person name="Shekher M."/>
            <person name="Matero A."/>
            <person name="Shah R."/>
            <person name="Swaby I.K."/>
            <person name="O'Shaughnessy A."/>
            <person name="Rodriguez M."/>
            <person name="Hoffman J."/>
            <person name="Till S."/>
            <person name="Granat S."/>
            <person name="Shohdy N."/>
            <person name="Hasegawa A."/>
            <person name="Hameed A."/>
            <person name="Lodhi M."/>
            <person name="Johnson A."/>
            <person name="Chen E."/>
            <person name="Marra M.A."/>
            <person name="Martienssen R."/>
            <person name="McCombie W.R."/>
        </authorList>
    </citation>
    <scope>NUCLEOTIDE SEQUENCE [LARGE SCALE GENOMIC DNA]</scope>
    <source>
        <strain evidence="3">cv. Columbia</strain>
    </source>
</reference>
<reference key="2">
    <citation type="journal article" date="2017" name="Plant J.">
        <title>Araport11: a complete reannotation of the Arabidopsis thaliana reference genome.</title>
        <authorList>
            <person name="Cheng C.Y."/>
            <person name="Krishnakumar V."/>
            <person name="Chan A.P."/>
            <person name="Thibaud-Nissen F."/>
            <person name="Schobel S."/>
            <person name="Town C.D."/>
        </authorList>
    </citation>
    <scope>GENOME REANNOTATION</scope>
    <source>
        <strain>cv. Columbia</strain>
    </source>
</reference>
<reference key="3">
    <citation type="journal article" date="2006" name="Plant Biotechnol. J.">
        <title>Simultaneous high-throughput recombinational cloning of open reading frames in closed and open configurations.</title>
        <authorList>
            <person name="Underwood B.A."/>
            <person name="Vanderhaeghen R."/>
            <person name="Whitford R."/>
            <person name="Town C.D."/>
            <person name="Hilson P."/>
        </authorList>
    </citation>
    <scope>NUCLEOTIDE SEQUENCE [LARGE SCALE MRNA]</scope>
    <source>
        <strain>cv. Columbia</strain>
    </source>
</reference>
<reference key="4">
    <citation type="journal article" date="2007" name="Plant J.">
        <title>Small cysteine-rich peptides resembling antimicrobial peptides have been under-predicted in plants.</title>
        <authorList>
            <person name="Silverstein K.A.T."/>
            <person name="Moskal W.A. Jr."/>
            <person name="Wu H.C."/>
            <person name="Underwood B.A."/>
            <person name="Graham M.A."/>
            <person name="Town C.D."/>
            <person name="VandenBosch K.A."/>
        </authorList>
    </citation>
    <scope>NUCLEOTIDE SEQUENCE [LARGE SCALE MRNA]</scope>
    <source>
        <strain>cv. Columbia</strain>
    </source>
</reference>
<reference evidence="4" key="5">
    <citation type="journal article" date="2001" name="Plant Mol. Biol.">
        <title>Two large Arabidopsis thaliana gene families are homologous to the Brassica gene superfamily that encodes pollen coat proteins and the male component of the self-incompatibility response.</title>
        <authorList>
            <person name="Vanoosthuyse V."/>
            <person name="Miege C."/>
            <person name="Dumas C."/>
            <person name="Cock J.M."/>
        </authorList>
    </citation>
    <scope>IDENTIFICATION</scope>
</reference>
<reference key="6">
    <citation type="journal article" date="2005" name="Plant Physiol.">
        <title>Genome organization of more than 300 defensin-like genes in Arabidopsis.</title>
        <authorList>
            <person name="Silverstein K.A.T."/>
            <person name="Graham M.A."/>
            <person name="Paape T.D."/>
            <person name="VandenBosch K.A."/>
        </authorList>
    </citation>
    <scope>GENE FAMILY</scope>
</reference>
<evidence type="ECO:0000250" key="1"/>
<evidence type="ECO:0000255" key="2"/>
<evidence type="ECO:0000269" key="3">
    <source>
    </source>
</evidence>
<evidence type="ECO:0000305" key="4"/>
<proteinExistence type="inferred from homology"/>
<organism evidence="4">
    <name type="scientific">Arabidopsis thaliana</name>
    <name type="common">Mouse-ear cress</name>
    <dbReference type="NCBI Taxonomy" id="3702"/>
    <lineage>
        <taxon>Eukaryota</taxon>
        <taxon>Viridiplantae</taxon>
        <taxon>Streptophyta</taxon>
        <taxon>Embryophyta</taxon>
        <taxon>Tracheophyta</taxon>
        <taxon>Spermatophyta</taxon>
        <taxon>Magnoliopsida</taxon>
        <taxon>eudicotyledons</taxon>
        <taxon>Gunneridae</taxon>
        <taxon>Pentapetalae</taxon>
        <taxon>rosids</taxon>
        <taxon>malvids</taxon>
        <taxon>Brassicales</taxon>
        <taxon>Brassicaceae</taxon>
        <taxon>Camelineae</taxon>
        <taxon>Arabidopsis</taxon>
    </lineage>
</organism>
<feature type="signal peptide" evidence="2">
    <location>
        <begin position="1"/>
        <end position="27"/>
    </location>
</feature>
<feature type="chain" id="PRO_0000017266" description="Defensin-like protein 159">
    <location>
        <begin position="28"/>
        <end position="77"/>
    </location>
</feature>
<feature type="disulfide bond" evidence="1">
    <location>
        <begin position="30"/>
        <end position="77"/>
    </location>
</feature>
<feature type="disulfide bond" evidence="1">
    <location>
        <begin position="40"/>
        <end position="59"/>
    </location>
</feature>
<feature type="disulfide bond" evidence="1">
    <location>
        <begin position="45"/>
        <end position="71"/>
    </location>
</feature>
<feature type="disulfide bond" evidence="1">
    <location>
        <begin position="49"/>
        <end position="73"/>
    </location>
</feature>
<feature type="sequence conflict" description="In Ref. 4; EF182821." evidence="4" ref="4">
    <original>C</original>
    <variation>F</variation>
    <location>
        <position position="45"/>
    </location>
</feature>